<comment type="subunit">
    <text evidence="1">Forms oligomers.</text>
</comment>
<comment type="subcellular location">
    <subcellularLocation>
        <location evidence="1">Cytoplasm</location>
        <location evidence="1">Nucleoid</location>
    </subcellularLocation>
</comment>
<comment type="similarity">
    <text evidence="1">Belongs to the MraZ family.</text>
</comment>
<accession>Q8E9N9</accession>
<evidence type="ECO:0000255" key="1">
    <source>
        <dbReference type="HAMAP-Rule" id="MF_01008"/>
    </source>
</evidence>
<evidence type="ECO:0000255" key="2">
    <source>
        <dbReference type="PROSITE-ProRule" id="PRU01076"/>
    </source>
</evidence>
<gene>
    <name evidence="1" type="primary">mraZ</name>
    <name type="ordered locus">SO_4228</name>
</gene>
<organism>
    <name type="scientific">Shewanella oneidensis (strain ATCC 700550 / JCM 31522 / CIP 106686 / LMG 19005 / NCIMB 14063 / MR-1)</name>
    <dbReference type="NCBI Taxonomy" id="211586"/>
    <lineage>
        <taxon>Bacteria</taxon>
        <taxon>Pseudomonadati</taxon>
        <taxon>Pseudomonadota</taxon>
        <taxon>Gammaproteobacteria</taxon>
        <taxon>Alteromonadales</taxon>
        <taxon>Shewanellaceae</taxon>
        <taxon>Shewanella</taxon>
    </lineage>
</organism>
<sequence>MFRGASAINLDTKGRIAIPARYREPLQLEHQGRIVITVDIQSACLLLYPIHEWELIEAKLLKLSDTDKTQRSLKRMLLGYAHEVELDGNGRILLPPPLRQYANLDKRIMLVGQLNKFELWDEQAWLQQIDECQETIRGEELANNERLADFSL</sequence>
<proteinExistence type="inferred from homology"/>
<protein>
    <recommendedName>
        <fullName>Transcriptional regulator MraZ</fullName>
    </recommendedName>
</protein>
<feature type="chain" id="PRO_0000108533" description="Transcriptional regulator MraZ">
    <location>
        <begin position="1"/>
        <end position="152"/>
    </location>
</feature>
<feature type="domain" description="SpoVT-AbrB 1" evidence="2">
    <location>
        <begin position="5"/>
        <end position="52"/>
    </location>
</feature>
<feature type="domain" description="SpoVT-AbrB 2" evidence="2">
    <location>
        <begin position="81"/>
        <end position="124"/>
    </location>
</feature>
<reference key="1">
    <citation type="journal article" date="2002" name="Nat. Biotechnol.">
        <title>Genome sequence of the dissimilatory metal ion-reducing bacterium Shewanella oneidensis.</title>
        <authorList>
            <person name="Heidelberg J.F."/>
            <person name="Paulsen I.T."/>
            <person name="Nelson K.E."/>
            <person name="Gaidos E.J."/>
            <person name="Nelson W.C."/>
            <person name="Read T.D."/>
            <person name="Eisen J.A."/>
            <person name="Seshadri R."/>
            <person name="Ward N.L."/>
            <person name="Methe B.A."/>
            <person name="Clayton R.A."/>
            <person name="Meyer T."/>
            <person name="Tsapin A."/>
            <person name="Scott J."/>
            <person name="Beanan M.J."/>
            <person name="Brinkac L.M."/>
            <person name="Daugherty S.C."/>
            <person name="DeBoy R.T."/>
            <person name="Dodson R.J."/>
            <person name="Durkin A.S."/>
            <person name="Haft D.H."/>
            <person name="Kolonay J.F."/>
            <person name="Madupu R."/>
            <person name="Peterson J.D."/>
            <person name="Umayam L.A."/>
            <person name="White O."/>
            <person name="Wolf A.M."/>
            <person name="Vamathevan J.J."/>
            <person name="Weidman J.F."/>
            <person name="Impraim M."/>
            <person name="Lee K."/>
            <person name="Berry K.J."/>
            <person name="Lee C."/>
            <person name="Mueller J."/>
            <person name="Khouri H.M."/>
            <person name="Gill J."/>
            <person name="Utterback T.R."/>
            <person name="McDonald L.A."/>
            <person name="Feldblyum T.V."/>
            <person name="Smith H.O."/>
            <person name="Venter J.C."/>
            <person name="Nealson K.H."/>
            <person name="Fraser C.M."/>
        </authorList>
    </citation>
    <scope>NUCLEOTIDE SEQUENCE [LARGE SCALE GENOMIC DNA]</scope>
    <source>
        <strain>ATCC 700550 / JCM 31522 / CIP 106686 / LMG 19005 / NCIMB 14063 / MR-1</strain>
    </source>
</reference>
<name>MRAZ_SHEON</name>
<dbReference type="EMBL" id="AE014299">
    <property type="protein sequence ID" value="AAN57200.1"/>
    <property type="molecule type" value="Genomic_DNA"/>
</dbReference>
<dbReference type="RefSeq" id="NP_719756.1">
    <property type="nucleotide sequence ID" value="NC_004347.2"/>
</dbReference>
<dbReference type="RefSeq" id="WP_011073909.1">
    <property type="nucleotide sequence ID" value="NC_004347.2"/>
</dbReference>
<dbReference type="SMR" id="Q8E9N9"/>
<dbReference type="STRING" id="211586.SO_4228"/>
<dbReference type="PaxDb" id="211586-SO_4228"/>
<dbReference type="KEGG" id="son:SO_4228"/>
<dbReference type="PATRIC" id="fig|211586.12.peg.4086"/>
<dbReference type="eggNOG" id="COG2001">
    <property type="taxonomic scope" value="Bacteria"/>
</dbReference>
<dbReference type="HOGENOM" id="CLU_107907_2_0_6"/>
<dbReference type="OrthoDB" id="9807753at2"/>
<dbReference type="PhylomeDB" id="Q8E9N9"/>
<dbReference type="BioCyc" id="SONE211586:G1GMP-3905-MONOMER"/>
<dbReference type="Proteomes" id="UP000008186">
    <property type="component" value="Chromosome"/>
</dbReference>
<dbReference type="GO" id="GO:0005737">
    <property type="term" value="C:cytoplasm"/>
    <property type="evidence" value="ECO:0007669"/>
    <property type="project" value="UniProtKB-UniRule"/>
</dbReference>
<dbReference type="GO" id="GO:0009295">
    <property type="term" value="C:nucleoid"/>
    <property type="evidence" value="ECO:0007669"/>
    <property type="project" value="UniProtKB-SubCell"/>
</dbReference>
<dbReference type="GO" id="GO:0003700">
    <property type="term" value="F:DNA-binding transcription factor activity"/>
    <property type="evidence" value="ECO:0000318"/>
    <property type="project" value="GO_Central"/>
</dbReference>
<dbReference type="GO" id="GO:0000976">
    <property type="term" value="F:transcription cis-regulatory region binding"/>
    <property type="evidence" value="ECO:0000318"/>
    <property type="project" value="GO_Central"/>
</dbReference>
<dbReference type="GO" id="GO:2000143">
    <property type="term" value="P:negative regulation of DNA-templated transcription initiation"/>
    <property type="evidence" value="ECO:0000318"/>
    <property type="project" value="GO_Central"/>
</dbReference>
<dbReference type="CDD" id="cd16321">
    <property type="entry name" value="MraZ_C"/>
    <property type="match status" value="1"/>
</dbReference>
<dbReference type="CDD" id="cd16320">
    <property type="entry name" value="MraZ_N"/>
    <property type="match status" value="1"/>
</dbReference>
<dbReference type="FunFam" id="3.40.1550.20:FF:000001">
    <property type="entry name" value="Transcriptional regulator MraZ"/>
    <property type="match status" value="1"/>
</dbReference>
<dbReference type="Gene3D" id="3.40.1550.20">
    <property type="entry name" value="Transcriptional regulator MraZ domain"/>
    <property type="match status" value="1"/>
</dbReference>
<dbReference type="HAMAP" id="MF_01008">
    <property type="entry name" value="MraZ"/>
    <property type="match status" value="1"/>
</dbReference>
<dbReference type="InterPro" id="IPR003444">
    <property type="entry name" value="MraZ"/>
</dbReference>
<dbReference type="InterPro" id="IPR035644">
    <property type="entry name" value="MraZ_C"/>
</dbReference>
<dbReference type="InterPro" id="IPR020603">
    <property type="entry name" value="MraZ_dom"/>
</dbReference>
<dbReference type="InterPro" id="IPR035642">
    <property type="entry name" value="MraZ_N"/>
</dbReference>
<dbReference type="InterPro" id="IPR038619">
    <property type="entry name" value="MraZ_sf"/>
</dbReference>
<dbReference type="InterPro" id="IPR007159">
    <property type="entry name" value="SpoVT-AbrB_dom"/>
</dbReference>
<dbReference type="InterPro" id="IPR037914">
    <property type="entry name" value="SpoVT-AbrB_sf"/>
</dbReference>
<dbReference type="NCBIfam" id="TIGR00242">
    <property type="entry name" value="division/cell wall cluster transcriptional repressor MraZ"/>
    <property type="match status" value="1"/>
</dbReference>
<dbReference type="PANTHER" id="PTHR34701">
    <property type="entry name" value="TRANSCRIPTIONAL REGULATOR MRAZ"/>
    <property type="match status" value="1"/>
</dbReference>
<dbReference type="PANTHER" id="PTHR34701:SF1">
    <property type="entry name" value="TRANSCRIPTIONAL REGULATOR MRAZ"/>
    <property type="match status" value="1"/>
</dbReference>
<dbReference type="Pfam" id="PF02381">
    <property type="entry name" value="MraZ"/>
    <property type="match status" value="2"/>
</dbReference>
<dbReference type="SUPFAM" id="SSF89447">
    <property type="entry name" value="AbrB/MazE/MraZ-like"/>
    <property type="match status" value="1"/>
</dbReference>
<dbReference type="PROSITE" id="PS51740">
    <property type="entry name" value="SPOVT_ABRB"/>
    <property type="match status" value="2"/>
</dbReference>
<keyword id="KW-0963">Cytoplasm</keyword>
<keyword id="KW-0238">DNA-binding</keyword>
<keyword id="KW-1185">Reference proteome</keyword>
<keyword id="KW-0677">Repeat</keyword>
<keyword id="KW-0804">Transcription</keyword>
<keyword id="KW-0805">Transcription regulation</keyword>